<comment type="function">
    <text evidence="2 5 6">Responsible for the deacetylation of lysine residues on the N-terminal part of the core histones (H2A, H2B, H3 and H4) (By similarity). Histone deacetylation gives a tag for epigenetic repression and plays an important role in transcriptional regulation, cell cycle progression and developmental events (By similarity). Histone deacetylases act via the formation of large multiprotein complexes (By similarity). Involved in transduction of sensory signals, together with egl-4, kin-29 and mef-2; binding to transcription factor mef-2 enables negative modulation of chemoreceptor gene expression in chemosensory neurons (PubMed:17170704, PubMed:18832350). May be involved in muscle development (By similarity).</text>
</comment>
<comment type="catalytic activity">
    <reaction>
        <text>N(6)-acetyl-L-lysyl-[histone] + H2O = L-lysyl-[histone] + acetate</text>
        <dbReference type="Rhea" id="RHEA:58196"/>
        <dbReference type="Rhea" id="RHEA-COMP:9845"/>
        <dbReference type="Rhea" id="RHEA-COMP:11338"/>
        <dbReference type="ChEBI" id="CHEBI:15377"/>
        <dbReference type="ChEBI" id="CHEBI:29969"/>
        <dbReference type="ChEBI" id="CHEBI:30089"/>
        <dbReference type="ChEBI" id="CHEBI:61930"/>
        <dbReference type="EC" id="3.5.1.98"/>
    </reaction>
</comment>
<comment type="subunit">
    <molecule>Isoform b</molecule>
    <text evidence="4">Interacts with mef-2.</text>
</comment>
<comment type="subcellular location">
    <subcellularLocation>
        <location evidence="8">Nucleus</location>
    </subcellularLocation>
</comment>
<comment type="alternative products">
    <event type="alternative splicing"/>
    <isoform>
        <id>O17323-1</id>
        <name>a</name>
        <sequence type="displayed"/>
    </isoform>
    <isoform>
        <id>O17323-2</id>
        <name>b</name>
        <sequence type="described" ref="VSP_044209"/>
    </isoform>
</comment>
<comment type="tissue specificity">
    <text evidence="4">Expressed in body-wall muscle cells, hypodermal seam cells and neuronal cells including sensory amphid neuronal processes, the nerve ring, ventral nerve cords and motor neuronal commissures.</text>
</comment>
<comment type="PTM">
    <text evidence="5 6">Phosphorylated by serine/threonine-protein kinase kin-29 at Ser-251; the phosphorylation inhibits repression of transcription by mef-2 (PubMed:17170704). May be phosphorylated by either cyclic-AMP dependent or cyclic-GMP dependent protein kinases (PubMed:18832350).</text>
</comment>
<comment type="similarity">
    <text evidence="8">Belongs to the histone deacetylase family. HD type 2 subfamily.</text>
</comment>
<organism>
    <name type="scientific">Caenorhabditis elegans</name>
    <dbReference type="NCBI Taxonomy" id="6239"/>
    <lineage>
        <taxon>Eukaryota</taxon>
        <taxon>Metazoa</taxon>
        <taxon>Ecdysozoa</taxon>
        <taxon>Nematoda</taxon>
        <taxon>Chromadorea</taxon>
        <taxon>Rhabditida</taxon>
        <taxon>Rhabditina</taxon>
        <taxon>Rhabditomorpha</taxon>
        <taxon>Rhabditoidea</taxon>
        <taxon>Rhabditidae</taxon>
        <taxon>Peloderinae</taxon>
        <taxon>Caenorhabditis</taxon>
    </lineage>
</organism>
<protein>
    <recommendedName>
        <fullName>Histone deacetylase 4</fullName>
        <ecNumber>3.5.1.98</ecNumber>
    </recommendedName>
    <alternativeName>
        <fullName>CeHDA-7</fullName>
    </alternativeName>
    <alternativeName>
        <fullName>Histone deacetylase 7</fullName>
    </alternativeName>
</protein>
<dbReference type="EC" id="3.5.1.98"/>
<dbReference type="EMBL" id="FO080490">
    <property type="protein sequence ID" value="CCD64116.1"/>
    <property type="molecule type" value="Genomic_DNA"/>
</dbReference>
<dbReference type="EMBL" id="FO080492">
    <property type="protein sequence ID" value="CCD64116.1"/>
    <property type="status" value="JOINED"/>
    <property type="molecule type" value="Genomic_DNA"/>
</dbReference>
<dbReference type="EMBL" id="FO080490">
    <property type="protein sequence ID" value="CCF23337.1"/>
    <property type="molecule type" value="Genomic_DNA"/>
</dbReference>
<dbReference type="EMBL" id="FO080492">
    <property type="protein sequence ID" value="CCF23337.1"/>
    <property type="status" value="JOINED"/>
    <property type="molecule type" value="Genomic_DNA"/>
</dbReference>
<dbReference type="PIR" id="T32425">
    <property type="entry name" value="T32425"/>
</dbReference>
<dbReference type="RefSeq" id="NP_001257278.1">
    <molecule id="O17323-1"/>
    <property type="nucleotide sequence ID" value="NM_001270349.4"/>
</dbReference>
<dbReference type="RefSeq" id="NP_001257279.1">
    <molecule id="O17323-2"/>
    <property type="nucleotide sequence ID" value="NM_001270350.6"/>
</dbReference>
<dbReference type="SMR" id="O17323"/>
<dbReference type="BioGRID" id="46606">
    <property type="interactions" value="3"/>
</dbReference>
<dbReference type="FunCoup" id="O17323">
    <property type="interactions" value="24"/>
</dbReference>
<dbReference type="IntAct" id="O17323">
    <property type="interactions" value="1"/>
</dbReference>
<dbReference type="MINT" id="O17323"/>
<dbReference type="STRING" id="6239.C10E2.3a.1"/>
<dbReference type="iPTMnet" id="O17323"/>
<dbReference type="PaxDb" id="6239-C10E2.3a"/>
<dbReference type="PeptideAtlas" id="O17323"/>
<dbReference type="EnsemblMetazoa" id="C10E2.3a.1">
    <molecule id="O17323-1"/>
    <property type="protein sequence ID" value="C10E2.3a.1"/>
    <property type="gene ID" value="WBGene00001837"/>
</dbReference>
<dbReference type="EnsemblMetazoa" id="C10E2.3b.1">
    <molecule id="O17323-2"/>
    <property type="protein sequence ID" value="C10E2.3b.1"/>
    <property type="gene ID" value="WBGene00001837"/>
</dbReference>
<dbReference type="GeneID" id="181723"/>
<dbReference type="KEGG" id="cel:CELE_C10E2.3"/>
<dbReference type="UCSC" id="C10E2.3">
    <property type="organism name" value="c. elegans"/>
</dbReference>
<dbReference type="AGR" id="WB:WBGene00001837"/>
<dbReference type="CTD" id="181723"/>
<dbReference type="WormBase" id="C10E2.3a">
    <molecule id="O17323-1"/>
    <property type="protein sequence ID" value="CE42060"/>
    <property type="gene ID" value="WBGene00001837"/>
    <property type="gene designation" value="hda-4"/>
</dbReference>
<dbReference type="WormBase" id="C10E2.3b">
    <molecule id="O17323-2"/>
    <property type="protein sequence ID" value="CE37192"/>
    <property type="gene ID" value="WBGene00001837"/>
    <property type="gene designation" value="hda-4"/>
</dbReference>
<dbReference type="eggNOG" id="KOG1343">
    <property type="taxonomic scope" value="Eukaryota"/>
</dbReference>
<dbReference type="GeneTree" id="ENSGT00940000169192"/>
<dbReference type="InParanoid" id="O17323"/>
<dbReference type="OMA" id="QKVIAIH"/>
<dbReference type="OrthoDB" id="5232919at2759"/>
<dbReference type="Reactome" id="R-CEL-3108214">
    <property type="pathway name" value="SUMOylation of DNA damage response and repair proteins"/>
</dbReference>
<dbReference type="Reactome" id="R-CEL-8951936">
    <property type="pathway name" value="RUNX3 regulates p14-ARF"/>
</dbReference>
<dbReference type="PRO" id="PR:O17323"/>
<dbReference type="Proteomes" id="UP000001940">
    <property type="component" value="Chromosome X"/>
</dbReference>
<dbReference type="Bgee" id="WBGene00001837">
    <property type="expression patterns" value="Expressed in pharyngeal muscle cell (C elegans) and 3 other cell types or tissues"/>
</dbReference>
<dbReference type="GO" id="GO:0005737">
    <property type="term" value="C:cytoplasm"/>
    <property type="evidence" value="ECO:0000250"/>
    <property type="project" value="WormBase"/>
</dbReference>
<dbReference type="GO" id="GO:0000118">
    <property type="term" value="C:histone deacetylase complex"/>
    <property type="evidence" value="ECO:0000250"/>
    <property type="project" value="WormBase"/>
</dbReference>
<dbReference type="GO" id="GO:0005634">
    <property type="term" value="C:nucleus"/>
    <property type="evidence" value="ECO:0000314"/>
    <property type="project" value="WormBase"/>
</dbReference>
<dbReference type="GO" id="GO:0005516">
    <property type="term" value="F:calmodulin binding"/>
    <property type="evidence" value="ECO:0000250"/>
    <property type="project" value="WormBase"/>
</dbReference>
<dbReference type="GO" id="GO:0004407">
    <property type="term" value="F:histone deacetylase activity"/>
    <property type="evidence" value="ECO:0000250"/>
    <property type="project" value="WormBase"/>
</dbReference>
<dbReference type="GO" id="GO:0141221">
    <property type="term" value="F:histone deacetylase activity, hydrolytic mechanism"/>
    <property type="evidence" value="ECO:0007669"/>
    <property type="project" value="UniProtKB-EC"/>
</dbReference>
<dbReference type="GO" id="GO:0061629">
    <property type="term" value="F:RNA polymerase II-specific DNA-binding transcription factor binding"/>
    <property type="evidence" value="ECO:0000353"/>
    <property type="project" value="WormBase"/>
</dbReference>
<dbReference type="GO" id="GO:0003714">
    <property type="term" value="F:transcription corepressor activity"/>
    <property type="evidence" value="ECO:0000250"/>
    <property type="project" value="WormBase"/>
</dbReference>
<dbReference type="GO" id="GO:0006325">
    <property type="term" value="P:chromatin organization"/>
    <property type="evidence" value="ECO:0000250"/>
    <property type="project" value="WormBase"/>
</dbReference>
<dbReference type="GO" id="GO:0040029">
    <property type="term" value="P:epigenetic regulation of gene expression"/>
    <property type="evidence" value="ECO:0000318"/>
    <property type="project" value="GO_Central"/>
</dbReference>
<dbReference type="GO" id="GO:0000122">
    <property type="term" value="P:negative regulation of transcription by RNA polymerase II"/>
    <property type="evidence" value="ECO:0000315"/>
    <property type="project" value="WormBase"/>
</dbReference>
<dbReference type="GO" id="GO:0007168">
    <property type="term" value="P:receptor guanylyl cyclase signaling pathway"/>
    <property type="evidence" value="ECO:0000315"/>
    <property type="project" value="UniProtKB"/>
</dbReference>
<dbReference type="GO" id="GO:0045664">
    <property type="term" value="P:regulation of neuron differentiation"/>
    <property type="evidence" value="ECO:0000315"/>
    <property type="project" value="WormBase"/>
</dbReference>
<dbReference type="GO" id="GO:0007165">
    <property type="term" value="P:signal transduction"/>
    <property type="evidence" value="ECO:0000315"/>
    <property type="project" value="UniProtKB"/>
</dbReference>
<dbReference type="CDD" id="cd11681">
    <property type="entry name" value="HDAC_classIIa"/>
    <property type="match status" value="1"/>
</dbReference>
<dbReference type="Gene3D" id="3.40.800.20">
    <property type="entry name" value="Histone deacetylase domain"/>
    <property type="match status" value="1"/>
</dbReference>
<dbReference type="InterPro" id="IPR050284">
    <property type="entry name" value="HDAC_PDAC"/>
</dbReference>
<dbReference type="InterPro" id="IPR000286">
    <property type="entry name" value="His_deacetylse"/>
</dbReference>
<dbReference type="InterPro" id="IPR023801">
    <property type="entry name" value="His_deacetylse_dom"/>
</dbReference>
<dbReference type="InterPro" id="IPR037138">
    <property type="entry name" value="His_deacetylse_dom_sf"/>
</dbReference>
<dbReference type="InterPro" id="IPR023696">
    <property type="entry name" value="Ureohydrolase_dom_sf"/>
</dbReference>
<dbReference type="PANTHER" id="PTHR10625:SF5">
    <property type="entry name" value="HISTONE DEACETYLASE"/>
    <property type="match status" value="1"/>
</dbReference>
<dbReference type="PANTHER" id="PTHR10625">
    <property type="entry name" value="HISTONE DEACETYLASE HDAC1-RELATED"/>
    <property type="match status" value="1"/>
</dbReference>
<dbReference type="Pfam" id="PF00850">
    <property type="entry name" value="Hist_deacetyl"/>
    <property type="match status" value="1"/>
</dbReference>
<dbReference type="PRINTS" id="PR01270">
    <property type="entry name" value="HDASUPER"/>
</dbReference>
<dbReference type="SUPFAM" id="SSF52768">
    <property type="entry name" value="Arginase/deacetylase"/>
    <property type="match status" value="1"/>
</dbReference>
<proteinExistence type="evidence at protein level"/>
<sequence length="869" mass="94411">MEEASSSTGSAGGAGPSVPNLPSTSEAAIGQTNLEPESIALLQSQLQEYRQKQMDLIGHFQRAQQELSVQHMHNLYAALQQQQQLQNLQTERSAVNPLLISQQHSTEDQNSGPAAPLSLANSLTNLLSSSNGNLSVPQTPTKEHHPTAPTSNRKCDLPRSNSTTISQLTKDRLKNMIANRSKGESNSQSNLMSNSVTANGNGHDNGRKLKNSNSQVNVSSPHFEPYRLPTSLANAHNLQQASEFQLRKVNSEPNLKMRIRAKLLSKGSSPVQHVQQNNSQFNFTHPQLKRSDSETSQNVPLDFMQSSSQTNLPHLMLPSPSLPNLAAAGAFHGLNLPVGQDLNAFMAVANLSPFLSLPSLLNKKLELGGLTDEGDRNGLIGSSSTSSLASNVSMGSHQYQSLLKQQIRDLVLRRKSLVREDPEGEGLAELYNGLLPQAKLQQLQALAAESGFLAKQEPTCTTGLGYDQAMVRHECCCGNNASHVENGGRIQSIWSKLIEHGHVQKCEKVTAKKASLEQLQLVHSQTYTTFFAVSPTACLKIDANSLPLKRFLQLPCGGIGVDSDTYFNDASTQTAARLAAGTLIELSSQVAEGRLKNGFACIRPPGHHAEHEQAMGFCFFNNVAVAVKVLQTKYPAQCAKIAIIDWDVHHGNGTQLSFENDPNVLYMSLHRHDKGNFFPGTGSVTEVGKNDAKGLTVNVPFSGDVMRDPEYLAAWRTVIEPVMASFCPDFIIVSAGFDACHGHPNALGGYEVTPEMFGYMTKSLLNYASGKVVLALEGGYDLKSISEAAQQCVQALIGESDDAGRLSSVALESLPNPSAVETLQKVIAIHKSYWPALHGQEAAINTTEMQWRNLKLQVQMQQQQQQQQT</sequence>
<accession>O17323</accession>
<accession>H1ZUW2</accession>
<accession>Q400M0</accession>
<reference key="1">
    <citation type="journal article" date="2002" name="Biochem. Biophys. Res. Commun.">
        <title>Characterization of CeHDA-7, a class II histone deacetylase interacting with MEF-2 in Caenorhabditis elegans.</title>
        <authorList>
            <person name="Choi K.Y."/>
            <person name="Ji Y.J."/>
            <person name="Jee C."/>
            <person name="Kim do H."/>
            <person name="Ahnn J."/>
        </authorList>
    </citation>
    <scope>NUCLEOTIDE SEQUENCE [MRNA] (ISOFORM B)</scope>
    <scope>TISSUE SPECIFICITY</scope>
    <scope>INTERACTION WITH MEF-2 (ISOFORM B)</scope>
    <source>
        <strain>Bristol N2</strain>
    </source>
</reference>
<reference key="2">
    <citation type="journal article" date="1998" name="Science">
        <title>Genome sequence of the nematode C. elegans: a platform for investigating biology.</title>
        <authorList>
            <consortium name="The C. elegans sequencing consortium"/>
        </authorList>
    </citation>
    <scope>NUCLEOTIDE SEQUENCE [LARGE SCALE GENOMIC DNA]</scope>
    <scope>ALTERNATIVE SPLICING</scope>
    <source>
        <strain>Bristol N2</strain>
    </source>
</reference>
<reference evidence="8" key="3">
    <citation type="journal article" date="2007" name="EMBO J.">
        <title>KIN-29 SIK regulates chemoreceptor gene expression via an MEF2 transcription factor and a class II HDAC.</title>
        <authorList>
            <person name="van der Linden A.M."/>
            <person name="Nolan K.M."/>
            <person name="Sengupta P."/>
        </authorList>
    </citation>
    <scope>FUNCTION</scope>
    <scope>PHOSPHORYLATION AT SER-251</scope>
    <scope>MUTAGENESIS OF 80-GLN--THR-869 AND SER-251</scope>
</reference>
<reference evidence="8" key="4">
    <citation type="journal article" date="2008" name="Genetics">
        <title>The EGL-4 PKG acts with KIN-29 salt-inducible kinase and protein kinase A to regulate chemoreceptor gene expression and sensory behaviors in Caenorhabditis elegans.</title>
        <authorList>
            <person name="van der Linden A.M."/>
            <person name="Wiener S."/>
            <person name="You Y.J."/>
            <person name="Kim K."/>
            <person name="Avery L."/>
            <person name="Sengupta P."/>
        </authorList>
    </citation>
    <scope>FUNCTION</scope>
    <scope>PHOSPHORYLATION</scope>
    <scope>MUTAGENESIS OF SER-416 AND SER-515</scope>
</reference>
<feature type="chain" id="PRO_0000114742" description="Histone deacetylase 4">
    <location>
        <begin position="1"/>
        <end position="869"/>
    </location>
</feature>
<feature type="region of interest" description="Disordered" evidence="3">
    <location>
        <begin position="1"/>
        <end position="25"/>
    </location>
</feature>
<feature type="region of interest" description="Disordered" evidence="3">
    <location>
        <begin position="128"/>
        <end position="167"/>
    </location>
</feature>
<feature type="region of interest" description="Disordered" evidence="3">
    <location>
        <begin position="180"/>
        <end position="218"/>
    </location>
</feature>
<feature type="region of interest" description="Histone deacetylase">
    <location>
        <begin position="460"/>
        <end position="802"/>
    </location>
</feature>
<feature type="compositionally biased region" description="Polar residues" evidence="3">
    <location>
        <begin position="184"/>
        <end position="202"/>
    </location>
</feature>
<feature type="active site" evidence="1">
    <location>
        <position position="608"/>
    </location>
</feature>
<feature type="modified residue" description="Phosphoserine" evidence="5">
    <location>
        <position position="251"/>
    </location>
</feature>
<feature type="splice variant" id="VSP_044209" description="In isoform b." evidence="7">
    <location>
        <begin position="1"/>
        <end position="53"/>
    </location>
</feature>
<feature type="mutagenesis site" description="In oy59; Suppresses reduced chemoreceptor gene expression phenotype in a Ser/Thr kinase kin-29 mutant background." evidence="5">
    <location>
        <begin position="80"/>
        <end position="869"/>
    </location>
</feature>
<feature type="mutagenesis site" description="Abolishes phosphorylation; causes significant down-regulation of chemoreceptor str-1 expression." evidence="5">
    <original>S</original>
    <variation>A</variation>
    <location>
        <position position="251"/>
    </location>
</feature>
<feature type="mutagenesis site" description="Localizes to cytoplasm; does not affect chemoreceptor str-1 expression; when associated with A-515." evidence="6">
    <original>S</original>
    <variation>A</variation>
    <location>
        <position position="416"/>
    </location>
</feature>
<feature type="mutagenesis site" description="Localizes to cytoplasm; does not affect chemoreceptor str-1 expression; when associated with A-416." evidence="6">
    <original>S</original>
    <variation>A</variation>
    <location>
        <position position="515"/>
    </location>
</feature>
<gene>
    <name type="primary">hda-4</name>
    <name type="synonym">hda-7</name>
    <name type="ORF">C10E2.3</name>
</gene>
<evidence type="ECO:0000250" key="1"/>
<evidence type="ECO:0000250" key="2">
    <source>
        <dbReference type="UniProtKB" id="P56524"/>
    </source>
</evidence>
<evidence type="ECO:0000256" key="3">
    <source>
        <dbReference type="SAM" id="MobiDB-lite"/>
    </source>
</evidence>
<evidence type="ECO:0000269" key="4">
    <source>
    </source>
</evidence>
<evidence type="ECO:0000269" key="5">
    <source>
    </source>
</evidence>
<evidence type="ECO:0000269" key="6">
    <source>
    </source>
</evidence>
<evidence type="ECO:0000303" key="7">
    <source>
    </source>
</evidence>
<evidence type="ECO:0000305" key="8"/>
<name>HDA4_CAEEL</name>
<keyword id="KW-0025">Alternative splicing</keyword>
<keyword id="KW-0156">Chromatin regulator</keyword>
<keyword id="KW-0378">Hydrolase</keyword>
<keyword id="KW-0539">Nucleus</keyword>
<keyword id="KW-0597">Phosphoprotein</keyword>
<keyword id="KW-1185">Reference proteome</keyword>
<keyword id="KW-0678">Repressor</keyword>
<keyword id="KW-0804">Transcription</keyword>
<keyword id="KW-0805">Transcription regulation</keyword>